<organism>
    <name type="scientific">Rhizobium radiobacter</name>
    <name type="common">Agrobacterium tumefaciens</name>
    <name type="synonym">Agrobacterium radiobacter</name>
    <dbReference type="NCBI Taxonomy" id="358"/>
    <lineage>
        <taxon>Bacteria</taxon>
        <taxon>Pseudomonadati</taxon>
        <taxon>Pseudomonadota</taxon>
        <taxon>Alphaproteobacteria</taxon>
        <taxon>Hyphomicrobiales</taxon>
        <taxon>Rhizobiaceae</taxon>
        <taxon>Rhizobium/Agrobacterium group</taxon>
        <taxon>Agrobacterium</taxon>
        <taxon>Agrobacterium tumefaciens complex</taxon>
    </lineage>
</organism>
<comment type="function">
    <text>Seems to regulate the surface properties of the bacterium in the presence of plant cells or plant cell extracts. Mutations in this protein are responsible for an increased aggregation of the bacteria in the presence of pea root cap cells.</text>
</comment>
<comment type="induction">
    <text>By certain acidic polysaccharides found in carrot root extract. This induction may be regulated by the polygalacturonase.</text>
</comment>
<comment type="similarity">
    <text evidence="1">Belongs to the glycosyl hydrolase 88 family.</text>
</comment>
<name>PIC1_RHIRD</name>
<reference key="1">
    <citation type="journal article" date="1991" name="J. Bacteriol.">
        <title>Genetic and molecular analyses of picA, a plant-inducible locus on the Agrobacterium tumefaciens chromosome.</title>
        <authorList>
            <person name="Rong L."/>
            <person name="Karcher S.J."/>
            <person name="Gelvin S.B."/>
        </authorList>
    </citation>
    <scope>NUCLEOTIDE SEQUENCE [GENOMIC DNA]</scope>
    <source>
        <strain>A136</strain>
    </source>
</reference>
<sequence length="233" mass="24935">MGLPFQIEYGQTTGRPELIEDALRQFSAALALTADAGGLYVHGYDESRNQRWANPASGKSPAIWARAVGWLAMALVDALVILPDDSATAELRERTRRLLAGIIARQTQAGLWMQVLDNQGLAGNYAETSASAMFAYALLRAARLGLLRGEEAKAALSAGRQALAALLETRLELDEQGVARLTGIVHVAGLGGFDGNYRDGTPDYYLTEPVVSDDAKGVGPLMMAYAESLLLAR</sequence>
<dbReference type="EMBL" id="M62814">
    <property type="protein sequence ID" value="AAA22103.1"/>
    <property type="molecule type" value="Genomic_DNA"/>
</dbReference>
<dbReference type="PIR" id="B40364">
    <property type="entry name" value="B40364"/>
</dbReference>
<dbReference type="SMR" id="P0A3U7"/>
<dbReference type="GO" id="GO:0016787">
    <property type="term" value="F:hydrolase activity"/>
    <property type="evidence" value="ECO:0007669"/>
    <property type="project" value="UniProtKB-KW"/>
</dbReference>
<dbReference type="GO" id="GO:0005975">
    <property type="term" value="P:carbohydrate metabolic process"/>
    <property type="evidence" value="ECO:0007669"/>
    <property type="project" value="InterPro"/>
</dbReference>
<dbReference type="Gene3D" id="1.50.10.10">
    <property type="match status" value="1"/>
</dbReference>
<dbReference type="InterPro" id="IPR008928">
    <property type="entry name" value="6-hairpin_glycosidase_sf"/>
</dbReference>
<dbReference type="InterPro" id="IPR012341">
    <property type="entry name" value="6hp_glycosidase-like_sf"/>
</dbReference>
<dbReference type="InterPro" id="IPR010905">
    <property type="entry name" value="Glyco_hydro_88"/>
</dbReference>
<dbReference type="InterPro" id="IPR052043">
    <property type="entry name" value="PolySaccharide_Degr_Enz"/>
</dbReference>
<dbReference type="PANTHER" id="PTHR33886">
    <property type="entry name" value="UNSATURATED RHAMNOGALACTURONAN HYDROLASE (EUROFUNG)"/>
    <property type="match status" value="1"/>
</dbReference>
<dbReference type="PANTHER" id="PTHR33886:SF8">
    <property type="entry name" value="UNSATURATED RHAMNOGALACTURONAN HYDROLASE (EUROFUNG)"/>
    <property type="match status" value="1"/>
</dbReference>
<dbReference type="Pfam" id="PF07470">
    <property type="entry name" value="Glyco_hydro_88"/>
    <property type="match status" value="1"/>
</dbReference>
<dbReference type="SUPFAM" id="SSF48208">
    <property type="entry name" value="Six-hairpin glycosidases"/>
    <property type="match status" value="1"/>
</dbReference>
<proteinExistence type="evidence at transcript level"/>
<feature type="chain" id="PRO_0000171599" description="24.9 kDa protein in picA locus">
    <location>
        <begin position="1"/>
        <end position="233"/>
    </location>
</feature>
<protein>
    <recommendedName>
        <fullName>24.9 kDa protein in picA locus</fullName>
    </recommendedName>
    <alternativeName>
        <fullName>ORF1</fullName>
    </alternativeName>
</protein>
<keyword id="KW-0378">Hydrolase</keyword>
<accession>P0A3U7</accession>
<accession>P29112</accession>
<evidence type="ECO:0000305" key="1"/>